<proteinExistence type="inferred from homology"/>
<evidence type="ECO:0000255" key="1">
    <source>
        <dbReference type="HAMAP-Rule" id="MF_00228"/>
    </source>
</evidence>
<accession>C1A163</accession>
<comment type="function">
    <text evidence="1">Catalyzes the phosphorylation of the hydroxyl group of 4-methyl-5-beta-hydroxyethylthiazole (THZ).</text>
</comment>
<comment type="catalytic activity">
    <reaction evidence="1">
        <text>5-(2-hydroxyethyl)-4-methylthiazole + ATP = 4-methyl-5-(2-phosphooxyethyl)-thiazole + ADP + H(+)</text>
        <dbReference type="Rhea" id="RHEA:24212"/>
        <dbReference type="ChEBI" id="CHEBI:15378"/>
        <dbReference type="ChEBI" id="CHEBI:17957"/>
        <dbReference type="ChEBI" id="CHEBI:30616"/>
        <dbReference type="ChEBI" id="CHEBI:58296"/>
        <dbReference type="ChEBI" id="CHEBI:456216"/>
        <dbReference type="EC" id="2.7.1.50"/>
    </reaction>
</comment>
<comment type="cofactor">
    <cofactor evidence="1">
        <name>Mg(2+)</name>
        <dbReference type="ChEBI" id="CHEBI:18420"/>
    </cofactor>
</comment>
<comment type="pathway">
    <text evidence="1">Cofactor biosynthesis; thiamine diphosphate biosynthesis; 4-methyl-5-(2-phosphoethyl)-thiazole from 5-(2-hydroxyethyl)-4-methylthiazole: step 1/1.</text>
</comment>
<comment type="similarity">
    <text evidence="1">Belongs to the Thz kinase family.</text>
</comment>
<organism>
    <name type="scientific">Rhodococcus erythropolis (strain PR4 / NBRC 100887)</name>
    <dbReference type="NCBI Taxonomy" id="234621"/>
    <lineage>
        <taxon>Bacteria</taxon>
        <taxon>Bacillati</taxon>
        <taxon>Actinomycetota</taxon>
        <taxon>Actinomycetes</taxon>
        <taxon>Mycobacteriales</taxon>
        <taxon>Nocardiaceae</taxon>
        <taxon>Rhodococcus</taxon>
        <taxon>Rhodococcus erythropolis group</taxon>
    </lineage>
</organism>
<keyword id="KW-0067">ATP-binding</keyword>
<keyword id="KW-0418">Kinase</keyword>
<keyword id="KW-0460">Magnesium</keyword>
<keyword id="KW-0479">Metal-binding</keyword>
<keyword id="KW-0547">Nucleotide-binding</keyword>
<keyword id="KW-0784">Thiamine biosynthesis</keyword>
<keyword id="KW-0808">Transferase</keyword>
<sequence length="281" mass="28014">MSDTVSVETVASAIDALRDQVPLVQSLTNIVSANFLTNVLLAAGASNAHIDNVHEAGGFAAVAGGVLVNLGTPDDGTAEAFLISAEAARTAGTPWVLDPVGVGGLPWRSGIAVDLLRFHPSAIRGNASEIIALAGLGGDTRGVDSASDSADAVPAALSLLTHADAVSASGPVDYIVGRDGGGDVRGIRVSGGSALLPRVTSTGCSLGGLVAAYLAVTPTALDGLVAAHTHVAVASEIAEENASGPGSFAVAYLDALYTVNADTIRSRARIESFDLPAGVQN</sequence>
<dbReference type="EC" id="2.7.1.50" evidence="1"/>
<dbReference type="EMBL" id="AP008957">
    <property type="protein sequence ID" value="BAH34348.1"/>
    <property type="molecule type" value="Genomic_DNA"/>
</dbReference>
<dbReference type="RefSeq" id="WP_020908130.1">
    <property type="nucleotide sequence ID" value="NC_012490.1"/>
</dbReference>
<dbReference type="SMR" id="C1A163"/>
<dbReference type="KEGG" id="rer:RER_36400"/>
<dbReference type="PATRIC" id="fig|234621.6.peg.4157"/>
<dbReference type="eggNOG" id="COG2145">
    <property type="taxonomic scope" value="Bacteria"/>
</dbReference>
<dbReference type="HOGENOM" id="CLU_019943_0_1_11"/>
<dbReference type="UniPathway" id="UPA00060">
    <property type="reaction ID" value="UER00139"/>
</dbReference>
<dbReference type="Proteomes" id="UP000002204">
    <property type="component" value="Chromosome"/>
</dbReference>
<dbReference type="GO" id="GO:0005524">
    <property type="term" value="F:ATP binding"/>
    <property type="evidence" value="ECO:0007669"/>
    <property type="project" value="UniProtKB-UniRule"/>
</dbReference>
<dbReference type="GO" id="GO:0004417">
    <property type="term" value="F:hydroxyethylthiazole kinase activity"/>
    <property type="evidence" value="ECO:0007669"/>
    <property type="project" value="UniProtKB-UniRule"/>
</dbReference>
<dbReference type="GO" id="GO:0000287">
    <property type="term" value="F:magnesium ion binding"/>
    <property type="evidence" value="ECO:0007669"/>
    <property type="project" value="UniProtKB-UniRule"/>
</dbReference>
<dbReference type="GO" id="GO:0009228">
    <property type="term" value="P:thiamine biosynthetic process"/>
    <property type="evidence" value="ECO:0007669"/>
    <property type="project" value="UniProtKB-KW"/>
</dbReference>
<dbReference type="GO" id="GO:0009229">
    <property type="term" value="P:thiamine diphosphate biosynthetic process"/>
    <property type="evidence" value="ECO:0007669"/>
    <property type="project" value="UniProtKB-UniRule"/>
</dbReference>
<dbReference type="CDD" id="cd01170">
    <property type="entry name" value="THZ_kinase"/>
    <property type="match status" value="1"/>
</dbReference>
<dbReference type="Gene3D" id="3.40.1190.20">
    <property type="match status" value="1"/>
</dbReference>
<dbReference type="HAMAP" id="MF_00228">
    <property type="entry name" value="Thz_kinase"/>
    <property type="match status" value="1"/>
</dbReference>
<dbReference type="InterPro" id="IPR000417">
    <property type="entry name" value="Hyethyz_kinase"/>
</dbReference>
<dbReference type="InterPro" id="IPR029056">
    <property type="entry name" value="Ribokinase-like"/>
</dbReference>
<dbReference type="NCBIfam" id="NF006830">
    <property type="entry name" value="PRK09355.1"/>
    <property type="match status" value="1"/>
</dbReference>
<dbReference type="Pfam" id="PF02110">
    <property type="entry name" value="HK"/>
    <property type="match status" value="1"/>
</dbReference>
<dbReference type="PIRSF" id="PIRSF000513">
    <property type="entry name" value="Thz_kinase"/>
    <property type="match status" value="1"/>
</dbReference>
<dbReference type="PRINTS" id="PR01099">
    <property type="entry name" value="HYETHTZKNASE"/>
</dbReference>
<dbReference type="SUPFAM" id="SSF53613">
    <property type="entry name" value="Ribokinase-like"/>
    <property type="match status" value="1"/>
</dbReference>
<name>THIM_RHOE4</name>
<reference key="1">
    <citation type="submission" date="2005-03" db="EMBL/GenBank/DDBJ databases">
        <title>Comparison of the complete genome sequences of Rhodococcus erythropolis PR4 and Rhodococcus opacus B4.</title>
        <authorList>
            <person name="Takarada H."/>
            <person name="Sekine M."/>
            <person name="Hosoyama A."/>
            <person name="Yamada R."/>
            <person name="Fujisawa T."/>
            <person name="Omata S."/>
            <person name="Shimizu A."/>
            <person name="Tsukatani N."/>
            <person name="Tanikawa S."/>
            <person name="Fujita N."/>
            <person name="Harayama S."/>
        </authorList>
    </citation>
    <scope>NUCLEOTIDE SEQUENCE [LARGE SCALE GENOMIC DNA]</scope>
    <source>
        <strain>PR4 / NBRC 100887</strain>
    </source>
</reference>
<protein>
    <recommendedName>
        <fullName evidence="1">Hydroxyethylthiazole kinase</fullName>
        <ecNumber evidence="1">2.7.1.50</ecNumber>
    </recommendedName>
    <alternativeName>
        <fullName evidence="1">4-methyl-5-beta-hydroxyethylthiazole kinase</fullName>
        <shortName evidence="1">TH kinase</shortName>
        <shortName evidence="1">Thz kinase</shortName>
    </alternativeName>
</protein>
<gene>
    <name evidence="1" type="primary">thiM</name>
    <name type="ordered locus">RER_36400</name>
</gene>
<feature type="chain" id="PRO_0000383893" description="Hydroxyethylthiazole kinase">
    <location>
        <begin position="1"/>
        <end position="281"/>
    </location>
</feature>
<feature type="binding site" evidence="1">
    <location>
        <position position="124"/>
    </location>
    <ligand>
        <name>ATP</name>
        <dbReference type="ChEBI" id="CHEBI:30616"/>
    </ligand>
</feature>
<feature type="binding site" evidence="1">
    <location>
        <position position="169"/>
    </location>
    <ligand>
        <name>ATP</name>
        <dbReference type="ChEBI" id="CHEBI:30616"/>
    </ligand>
</feature>